<evidence type="ECO:0000250" key="1"/>
<evidence type="ECO:0000255" key="2">
    <source>
        <dbReference type="PROSITE-ProRule" id="PRU00208"/>
    </source>
</evidence>
<evidence type="ECO:0000255" key="3">
    <source>
        <dbReference type="PROSITE-ProRule" id="PRU01024"/>
    </source>
</evidence>
<organism>
    <name type="scientific">Caldanaerobacter subterraneus subsp. tengcongensis (strain DSM 15242 / JCM 11007 / NBRC 100824 / MB4)</name>
    <name type="common">Thermoanaerobacter tengcongensis</name>
    <dbReference type="NCBI Taxonomy" id="273068"/>
    <lineage>
        <taxon>Bacteria</taxon>
        <taxon>Bacillati</taxon>
        <taxon>Bacillota</taxon>
        <taxon>Clostridia</taxon>
        <taxon>Thermoanaerobacterales</taxon>
        <taxon>Thermoanaerobacteraceae</taxon>
        <taxon>Caldanaerobacter</taxon>
    </lineage>
</organism>
<comment type="similarity">
    <text evidence="3">Belongs to the class I-like SAM-binding methyltransferase superfamily. RNA M5U methyltransferase family.</text>
</comment>
<sequence length="450" mass="50782">MAKGEIVTVKIEEMDFKGYGVGYCEGKPLKVRGGILGQRVAVRVKKGKKGRAEGEIVEVIERSPFEVESPCPHFGECGGCTYQNLSYENQLKIKKDVVLKLLEKEGIKDFEFLGIERSPKVYGYRNKMEYTFGTDREGKKALGLHRKGKFYDVVMTDKCNIVDEDFTKALSLTFNYALEKNLPFYDKKTHEGYLRYLVVRKASKNGELLINIVTTTQLKHKFDDLVELYRSANFSSTLVGVLHTYNDSWSDAVICEKLEVLYGRDYLIEELLGLKFKISAFSFFQTNSYGAERIYSTVREFAGDVSNKTIFDLYCGTGTIGIVMAPLARKVIGIELVEEAVFSAKENAALNGLENAVFIAGDVSKKLREIKEKPDIVVVDPPRSGVNPKALEDIVNFEPEKIIYVSCNPESFARDLRLFVDKGYAVKKVKAIDMFPHTYHVELVGLLEKS</sequence>
<accession>Q8R933</accession>
<proteinExistence type="inferred from homology"/>
<name>Y1797_CALS4</name>
<keyword id="KW-0004">4Fe-4S</keyword>
<keyword id="KW-0408">Iron</keyword>
<keyword id="KW-0411">Iron-sulfur</keyword>
<keyword id="KW-0479">Metal-binding</keyword>
<keyword id="KW-0489">Methyltransferase</keyword>
<keyword id="KW-1185">Reference proteome</keyword>
<keyword id="KW-0949">S-adenosyl-L-methionine</keyword>
<keyword id="KW-0808">Transferase</keyword>
<dbReference type="EC" id="2.1.1.-"/>
<dbReference type="EMBL" id="AE008691">
    <property type="protein sequence ID" value="AAM24989.1"/>
    <property type="molecule type" value="Genomic_DNA"/>
</dbReference>
<dbReference type="RefSeq" id="WP_009611153.1">
    <property type="nucleotide sequence ID" value="NC_003869.1"/>
</dbReference>
<dbReference type="SMR" id="Q8R933"/>
<dbReference type="STRING" id="273068.TTE1797"/>
<dbReference type="KEGG" id="tte:TTE1797"/>
<dbReference type="eggNOG" id="COG2265">
    <property type="taxonomic scope" value="Bacteria"/>
</dbReference>
<dbReference type="HOGENOM" id="CLU_014689_7_2_9"/>
<dbReference type="OrthoDB" id="9804590at2"/>
<dbReference type="Proteomes" id="UP000000555">
    <property type="component" value="Chromosome"/>
</dbReference>
<dbReference type="GO" id="GO:0051539">
    <property type="term" value="F:4 iron, 4 sulfur cluster binding"/>
    <property type="evidence" value="ECO:0007669"/>
    <property type="project" value="UniProtKB-KW"/>
</dbReference>
<dbReference type="GO" id="GO:0046872">
    <property type="term" value="F:metal ion binding"/>
    <property type="evidence" value="ECO:0007669"/>
    <property type="project" value="UniProtKB-KW"/>
</dbReference>
<dbReference type="GO" id="GO:0070041">
    <property type="term" value="F:rRNA (uridine-C5-)-methyltransferase activity"/>
    <property type="evidence" value="ECO:0007669"/>
    <property type="project" value="TreeGrafter"/>
</dbReference>
<dbReference type="GO" id="GO:0070475">
    <property type="term" value="P:rRNA base methylation"/>
    <property type="evidence" value="ECO:0007669"/>
    <property type="project" value="TreeGrafter"/>
</dbReference>
<dbReference type="CDD" id="cd02440">
    <property type="entry name" value="AdoMet_MTases"/>
    <property type="match status" value="1"/>
</dbReference>
<dbReference type="FunFam" id="3.40.50.150:FF:000009">
    <property type="entry name" value="23S rRNA (Uracil(1939)-C(5))-methyltransferase RlmD"/>
    <property type="match status" value="1"/>
</dbReference>
<dbReference type="Gene3D" id="2.40.50.1070">
    <property type="match status" value="1"/>
</dbReference>
<dbReference type="Gene3D" id="2.40.50.140">
    <property type="entry name" value="Nucleic acid-binding proteins"/>
    <property type="match status" value="1"/>
</dbReference>
<dbReference type="Gene3D" id="3.40.50.150">
    <property type="entry name" value="Vaccinia Virus protein VP39"/>
    <property type="match status" value="1"/>
</dbReference>
<dbReference type="InterPro" id="IPR030390">
    <property type="entry name" value="MeTrfase_TrmA_AS"/>
</dbReference>
<dbReference type="InterPro" id="IPR030391">
    <property type="entry name" value="MeTrfase_TrmA_CS"/>
</dbReference>
<dbReference type="InterPro" id="IPR012340">
    <property type="entry name" value="NA-bd_OB-fold"/>
</dbReference>
<dbReference type="InterPro" id="IPR029063">
    <property type="entry name" value="SAM-dependent_MTases_sf"/>
</dbReference>
<dbReference type="InterPro" id="IPR002792">
    <property type="entry name" value="TRAM_dom"/>
</dbReference>
<dbReference type="InterPro" id="IPR010280">
    <property type="entry name" value="U5_MeTrfase_fam"/>
</dbReference>
<dbReference type="NCBIfam" id="TIGR00479">
    <property type="entry name" value="rumA"/>
    <property type="match status" value="1"/>
</dbReference>
<dbReference type="PANTHER" id="PTHR11061">
    <property type="entry name" value="RNA M5U METHYLTRANSFERASE"/>
    <property type="match status" value="1"/>
</dbReference>
<dbReference type="PANTHER" id="PTHR11061:SF30">
    <property type="entry name" value="TRNA (URACIL(54)-C(5))-METHYLTRANSFERASE"/>
    <property type="match status" value="1"/>
</dbReference>
<dbReference type="Pfam" id="PF01938">
    <property type="entry name" value="TRAM"/>
    <property type="match status" value="1"/>
</dbReference>
<dbReference type="Pfam" id="PF05958">
    <property type="entry name" value="tRNA_U5-meth_tr"/>
    <property type="match status" value="1"/>
</dbReference>
<dbReference type="SUPFAM" id="SSF50249">
    <property type="entry name" value="Nucleic acid-binding proteins"/>
    <property type="match status" value="1"/>
</dbReference>
<dbReference type="SUPFAM" id="SSF53335">
    <property type="entry name" value="S-adenosyl-L-methionine-dependent methyltransferases"/>
    <property type="match status" value="1"/>
</dbReference>
<dbReference type="PROSITE" id="PS51687">
    <property type="entry name" value="SAM_MT_RNA_M5U"/>
    <property type="match status" value="1"/>
</dbReference>
<dbReference type="PROSITE" id="PS50926">
    <property type="entry name" value="TRAM"/>
    <property type="match status" value="1"/>
</dbReference>
<dbReference type="PROSITE" id="PS01230">
    <property type="entry name" value="TRMA_1"/>
    <property type="match status" value="1"/>
</dbReference>
<dbReference type="PROSITE" id="PS01231">
    <property type="entry name" value="TRMA_2"/>
    <property type="match status" value="1"/>
</dbReference>
<feature type="chain" id="PRO_0000162048" description="Uncharacterized RNA methyltransferase TTE1797">
    <location>
        <begin position="1"/>
        <end position="450"/>
    </location>
</feature>
<feature type="domain" description="TRAM" evidence="2">
    <location>
        <begin position="1"/>
        <end position="58"/>
    </location>
</feature>
<feature type="active site" description="Nucleophile" evidence="3">
    <location>
        <position position="407"/>
    </location>
</feature>
<feature type="binding site" evidence="1">
    <location>
        <position position="71"/>
    </location>
    <ligand>
        <name>[4Fe-4S] cluster</name>
        <dbReference type="ChEBI" id="CHEBI:49883"/>
    </ligand>
</feature>
<feature type="binding site" evidence="1">
    <location>
        <position position="77"/>
    </location>
    <ligand>
        <name>[4Fe-4S] cluster</name>
        <dbReference type="ChEBI" id="CHEBI:49883"/>
    </ligand>
</feature>
<feature type="binding site" evidence="1">
    <location>
        <position position="80"/>
    </location>
    <ligand>
        <name>[4Fe-4S] cluster</name>
        <dbReference type="ChEBI" id="CHEBI:49883"/>
    </ligand>
</feature>
<feature type="binding site" evidence="1">
    <location>
        <position position="159"/>
    </location>
    <ligand>
        <name>[4Fe-4S] cluster</name>
        <dbReference type="ChEBI" id="CHEBI:49883"/>
    </ligand>
</feature>
<feature type="binding site" evidence="3">
    <location>
        <position position="285"/>
    </location>
    <ligand>
        <name>S-adenosyl-L-methionine</name>
        <dbReference type="ChEBI" id="CHEBI:59789"/>
    </ligand>
</feature>
<feature type="binding site" evidence="3">
    <location>
        <position position="314"/>
    </location>
    <ligand>
        <name>S-adenosyl-L-methionine</name>
        <dbReference type="ChEBI" id="CHEBI:59789"/>
    </ligand>
</feature>
<feature type="binding site" evidence="3">
    <location>
        <position position="335"/>
    </location>
    <ligand>
        <name>S-adenosyl-L-methionine</name>
        <dbReference type="ChEBI" id="CHEBI:59789"/>
    </ligand>
</feature>
<feature type="binding site" evidence="3">
    <location>
        <position position="380"/>
    </location>
    <ligand>
        <name>S-adenosyl-L-methionine</name>
        <dbReference type="ChEBI" id="CHEBI:59789"/>
    </ligand>
</feature>
<gene>
    <name type="ordered locus">TTE1797</name>
</gene>
<protein>
    <recommendedName>
        <fullName>Uncharacterized RNA methyltransferase TTE1797</fullName>
        <ecNumber>2.1.1.-</ecNumber>
    </recommendedName>
</protein>
<reference key="1">
    <citation type="journal article" date="2002" name="Genome Res.">
        <title>A complete sequence of the T. tengcongensis genome.</title>
        <authorList>
            <person name="Bao Q."/>
            <person name="Tian Y."/>
            <person name="Li W."/>
            <person name="Xu Z."/>
            <person name="Xuan Z."/>
            <person name="Hu S."/>
            <person name="Dong W."/>
            <person name="Yang J."/>
            <person name="Chen Y."/>
            <person name="Xue Y."/>
            <person name="Xu Y."/>
            <person name="Lai X."/>
            <person name="Huang L."/>
            <person name="Dong X."/>
            <person name="Ma Y."/>
            <person name="Ling L."/>
            <person name="Tan H."/>
            <person name="Chen R."/>
            <person name="Wang J."/>
            <person name="Yu J."/>
            <person name="Yang H."/>
        </authorList>
    </citation>
    <scope>NUCLEOTIDE SEQUENCE [LARGE SCALE GENOMIC DNA]</scope>
    <source>
        <strain>DSM 15242 / JCM 11007 / NBRC 100824 / MB4</strain>
    </source>
</reference>